<name>Y1183_CLOB8</name>
<proteinExistence type="inferred from homology"/>
<comment type="similarity">
    <text evidence="1">Belongs to the UPF0102 family.</text>
</comment>
<gene>
    <name type="ordered locus">Cbei_1183</name>
</gene>
<sequence>MKKINKDIGSFSEDLAKKYLEKNDYSILDCNFKNFLGEIDIICKKNTLLIIVEVKSRYNNNYGLPRESVNFSKQRSIIKVANSYINYKRLPNINVRFDVIEVYLNLESTNFKINHIKDAFRLN</sequence>
<feature type="chain" id="PRO_1000074807" description="UPF0102 protein Cbei_1183">
    <location>
        <begin position="1"/>
        <end position="123"/>
    </location>
</feature>
<reference key="1">
    <citation type="submission" date="2007-06" db="EMBL/GenBank/DDBJ databases">
        <title>Complete sequence of Clostridium beijerinckii NCIMB 8052.</title>
        <authorList>
            <consortium name="US DOE Joint Genome Institute"/>
            <person name="Copeland A."/>
            <person name="Lucas S."/>
            <person name="Lapidus A."/>
            <person name="Barry K."/>
            <person name="Detter J.C."/>
            <person name="Glavina del Rio T."/>
            <person name="Hammon N."/>
            <person name="Israni S."/>
            <person name="Dalin E."/>
            <person name="Tice H."/>
            <person name="Pitluck S."/>
            <person name="Sims D."/>
            <person name="Brettin T."/>
            <person name="Bruce D."/>
            <person name="Tapia R."/>
            <person name="Brainard J."/>
            <person name="Schmutz J."/>
            <person name="Larimer F."/>
            <person name="Land M."/>
            <person name="Hauser L."/>
            <person name="Kyrpides N."/>
            <person name="Mikhailova N."/>
            <person name="Bennet G."/>
            <person name="Cann I."/>
            <person name="Chen J.-S."/>
            <person name="Contreras A.L."/>
            <person name="Jones D."/>
            <person name="Kashket E."/>
            <person name="Mitchell W."/>
            <person name="Stoddard S."/>
            <person name="Schwarz W."/>
            <person name="Qureshi N."/>
            <person name="Young M."/>
            <person name="Shi Z."/>
            <person name="Ezeji T."/>
            <person name="White B."/>
            <person name="Blaschek H."/>
            <person name="Richardson P."/>
        </authorList>
    </citation>
    <scope>NUCLEOTIDE SEQUENCE [LARGE SCALE GENOMIC DNA]</scope>
    <source>
        <strain>ATCC 51743 / NCIMB 8052</strain>
    </source>
</reference>
<organism>
    <name type="scientific">Clostridium beijerinckii (strain ATCC 51743 / NCIMB 8052)</name>
    <name type="common">Clostridium acetobutylicum</name>
    <dbReference type="NCBI Taxonomy" id="290402"/>
    <lineage>
        <taxon>Bacteria</taxon>
        <taxon>Bacillati</taxon>
        <taxon>Bacillota</taxon>
        <taxon>Clostridia</taxon>
        <taxon>Eubacteriales</taxon>
        <taxon>Clostridiaceae</taxon>
        <taxon>Clostridium</taxon>
    </lineage>
</organism>
<evidence type="ECO:0000255" key="1">
    <source>
        <dbReference type="HAMAP-Rule" id="MF_00048"/>
    </source>
</evidence>
<accession>A6LSN5</accession>
<protein>
    <recommendedName>
        <fullName evidence="1">UPF0102 protein Cbei_1183</fullName>
    </recommendedName>
</protein>
<dbReference type="EMBL" id="CP000721">
    <property type="protein sequence ID" value="ABR33365.1"/>
    <property type="molecule type" value="Genomic_DNA"/>
</dbReference>
<dbReference type="RefSeq" id="WP_011968520.1">
    <property type="nucleotide sequence ID" value="NC_009617.1"/>
</dbReference>
<dbReference type="SMR" id="A6LSN5"/>
<dbReference type="KEGG" id="cbe:Cbei_1183"/>
<dbReference type="eggNOG" id="COG0792">
    <property type="taxonomic scope" value="Bacteria"/>
</dbReference>
<dbReference type="HOGENOM" id="CLU_115353_2_1_9"/>
<dbReference type="Proteomes" id="UP000000565">
    <property type="component" value="Chromosome"/>
</dbReference>
<dbReference type="GO" id="GO:0003676">
    <property type="term" value="F:nucleic acid binding"/>
    <property type="evidence" value="ECO:0007669"/>
    <property type="project" value="InterPro"/>
</dbReference>
<dbReference type="Gene3D" id="3.40.1350.10">
    <property type="match status" value="1"/>
</dbReference>
<dbReference type="HAMAP" id="MF_00048">
    <property type="entry name" value="UPF0102"/>
    <property type="match status" value="1"/>
</dbReference>
<dbReference type="InterPro" id="IPR011335">
    <property type="entry name" value="Restrct_endonuc-II-like"/>
</dbReference>
<dbReference type="InterPro" id="IPR011856">
    <property type="entry name" value="tRNA_endonuc-like_dom_sf"/>
</dbReference>
<dbReference type="InterPro" id="IPR003509">
    <property type="entry name" value="UPF0102_YraN-like"/>
</dbReference>
<dbReference type="NCBIfam" id="NF009150">
    <property type="entry name" value="PRK12497.1-3"/>
    <property type="match status" value="1"/>
</dbReference>
<dbReference type="NCBIfam" id="TIGR00252">
    <property type="entry name" value="YraN family protein"/>
    <property type="match status" value="1"/>
</dbReference>
<dbReference type="PANTHER" id="PTHR34039">
    <property type="entry name" value="UPF0102 PROTEIN YRAN"/>
    <property type="match status" value="1"/>
</dbReference>
<dbReference type="PANTHER" id="PTHR34039:SF1">
    <property type="entry name" value="UPF0102 PROTEIN YRAN"/>
    <property type="match status" value="1"/>
</dbReference>
<dbReference type="Pfam" id="PF02021">
    <property type="entry name" value="UPF0102"/>
    <property type="match status" value="1"/>
</dbReference>
<dbReference type="SUPFAM" id="SSF52980">
    <property type="entry name" value="Restriction endonuclease-like"/>
    <property type="match status" value="1"/>
</dbReference>